<feature type="chain" id="PRO_1000009591" description="tRNA-specific 2-thiouridylase MnmA">
    <location>
        <begin position="1"/>
        <end position="373"/>
    </location>
</feature>
<feature type="region of interest" description="Interaction with target base in tRNA" evidence="1">
    <location>
        <begin position="98"/>
        <end position="100"/>
    </location>
</feature>
<feature type="region of interest" description="Interaction with tRNA" evidence="1">
    <location>
        <begin position="150"/>
        <end position="152"/>
    </location>
</feature>
<feature type="region of interest" description="Interaction with tRNA" evidence="1">
    <location>
        <begin position="312"/>
        <end position="313"/>
    </location>
</feature>
<feature type="active site" description="Nucleophile" evidence="1">
    <location>
        <position position="103"/>
    </location>
</feature>
<feature type="active site" description="Cysteine persulfide intermediate" evidence="1">
    <location>
        <position position="200"/>
    </location>
</feature>
<feature type="binding site" evidence="1">
    <location>
        <begin position="12"/>
        <end position="19"/>
    </location>
    <ligand>
        <name>ATP</name>
        <dbReference type="ChEBI" id="CHEBI:30616"/>
    </ligand>
</feature>
<feature type="binding site" evidence="1">
    <location>
        <position position="38"/>
    </location>
    <ligand>
        <name>ATP</name>
        <dbReference type="ChEBI" id="CHEBI:30616"/>
    </ligand>
</feature>
<feature type="binding site" evidence="1">
    <location>
        <position position="127"/>
    </location>
    <ligand>
        <name>ATP</name>
        <dbReference type="ChEBI" id="CHEBI:30616"/>
    </ligand>
</feature>
<feature type="site" description="Interaction with tRNA" evidence="1">
    <location>
        <position position="128"/>
    </location>
</feature>
<feature type="site" description="Interaction with tRNA" evidence="1">
    <location>
        <position position="344"/>
    </location>
</feature>
<feature type="disulfide bond" description="Alternate" evidence="1">
    <location>
        <begin position="103"/>
        <end position="200"/>
    </location>
</feature>
<accession>Q03I88</accession>
<dbReference type="EC" id="2.8.1.13" evidence="1"/>
<dbReference type="EMBL" id="CP000419">
    <property type="protein sequence ID" value="ABJ67084.1"/>
    <property type="molecule type" value="Genomic_DNA"/>
</dbReference>
<dbReference type="RefSeq" id="WP_011681755.1">
    <property type="nucleotide sequence ID" value="NC_008532.1"/>
</dbReference>
<dbReference type="SMR" id="Q03I88"/>
<dbReference type="KEGG" id="ste:STER_1979"/>
<dbReference type="HOGENOM" id="CLU_035188_1_0_9"/>
<dbReference type="GO" id="GO:0005737">
    <property type="term" value="C:cytoplasm"/>
    <property type="evidence" value="ECO:0007669"/>
    <property type="project" value="UniProtKB-SubCell"/>
</dbReference>
<dbReference type="GO" id="GO:0005524">
    <property type="term" value="F:ATP binding"/>
    <property type="evidence" value="ECO:0007669"/>
    <property type="project" value="UniProtKB-KW"/>
</dbReference>
<dbReference type="GO" id="GO:0000049">
    <property type="term" value="F:tRNA binding"/>
    <property type="evidence" value="ECO:0007669"/>
    <property type="project" value="UniProtKB-KW"/>
</dbReference>
<dbReference type="GO" id="GO:0103016">
    <property type="term" value="F:tRNA-uridine 2-sulfurtransferase activity"/>
    <property type="evidence" value="ECO:0007669"/>
    <property type="project" value="UniProtKB-EC"/>
</dbReference>
<dbReference type="GO" id="GO:0002143">
    <property type="term" value="P:tRNA wobble position uridine thiolation"/>
    <property type="evidence" value="ECO:0007669"/>
    <property type="project" value="TreeGrafter"/>
</dbReference>
<dbReference type="CDD" id="cd01998">
    <property type="entry name" value="MnmA_TRMU-like"/>
    <property type="match status" value="1"/>
</dbReference>
<dbReference type="FunFam" id="2.30.30.280:FF:000001">
    <property type="entry name" value="tRNA-specific 2-thiouridylase MnmA"/>
    <property type="match status" value="1"/>
</dbReference>
<dbReference type="FunFam" id="2.40.30.10:FF:000023">
    <property type="entry name" value="tRNA-specific 2-thiouridylase MnmA"/>
    <property type="match status" value="1"/>
</dbReference>
<dbReference type="FunFam" id="3.40.50.620:FF:000004">
    <property type="entry name" value="tRNA-specific 2-thiouridylase MnmA"/>
    <property type="match status" value="1"/>
</dbReference>
<dbReference type="Gene3D" id="2.30.30.280">
    <property type="entry name" value="Adenine nucleotide alpha hydrolases-like domains"/>
    <property type="match status" value="1"/>
</dbReference>
<dbReference type="Gene3D" id="3.40.50.620">
    <property type="entry name" value="HUPs"/>
    <property type="match status" value="1"/>
</dbReference>
<dbReference type="Gene3D" id="2.40.30.10">
    <property type="entry name" value="Translation factors"/>
    <property type="match status" value="1"/>
</dbReference>
<dbReference type="HAMAP" id="MF_00144">
    <property type="entry name" value="tRNA_thiouridyl_MnmA"/>
    <property type="match status" value="1"/>
</dbReference>
<dbReference type="InterPro" id="IPR004506">
    <property type="entry name" value="MnmA-like"/>
</dbReference>
<dbReference type="InterPro" id="IPR046885">
    <property type="entry name" value="MnmA-like_C"/>
</dbReference>
<dbReference type="InterPro" id="IPR046884">
    <property type="entry name" value="MnmA-like_central"/>
</dbReference>
<dbReference type="InterPro" id="IPR023382">
    <property type="entry name" value="MnmA-like_central_sf"/>
</dbReference>
<dbReference type="InterPro" id="IPR014729">
    <property type="entry name" value="Rossmann-like_a/b/a_fold"/>
</dbReference>
<dbReference type="NCBIfam" id="NF001138">
    <property type="entry name" value="PRK00143.1"/>
    <property type="match status" value="1"/>
</dbReference>
<dbReference type="NCBIfam" id="TIGR00420">
    <property type="entry name" value="trmU"/>
    <property type="match status" value="1"/>
</dbReference>
<dbReference type="PANTHER" id="PTHR11933:SF5">
    <property type="entry name" value="MITOCHONDRIAL TRNA-SPECIFIC 2-THIOURIDYLASE 1"/>
    <property type="match status" value="1"/>
</dbReference>
<dbReference type="PANTHER" id="PTHR11933">
    <property type="entry name" value="TRNA 5-METHYLAMINOMETHYL-2-THIOURIDYLATE -METHYLTRANSFERASE"/>
    <property type="match status" value="1"/>
</dbReference>
<dbReference type="Pfam" id="PF03054">
    <property type="entry name" value="tRNA_Me_trans"/>
    <property type="match status" value="1"/>
</dbReference>
<dbReference type="Pfam" id="PF20258">
    <property type="entry name" value="tRNA_Me_trans_C"/>
    <property type="match status" value="1"/>
</dbReference>
<dbReference type="Pfam" id="PF20259">
    <property type="entry name" value="tRNA_Me_trans_M"/>
    <property type="match status" value="1"/>
</dbReference>
<dbReference type="SUPFAM" id="SSF52402">
    <property type="entry name" value="Adenine nucleotide alpha hydrolases-like"/>
    <property type="match status" value="1"/>
</dbReference>
<name>MNMA_STRTD</name>
<keyword id="KW-0067">ATP-binding</keyword>
<keyword id="KW-0963">Cytoplasm</keyword>
<keyword id="KW-1015">Disulfide bond</keyword>
<keyword id="KW-0547">Nucleotide-binding</keyword>
<keyword id="KW-0694">RNA-binding</keyword>
<keyword id="KW-0808">Transferase</keyword>
<keyword id="KW-0819">tRNA processing</keyword>
<keyword id="KW-0820">tRNA-binding</keyword>
<evidence type="ECO:0000255" key="1">
    <source>
        <dbReference type="HAMAP-Rule" id="MF_00144"/>
    </source>
</evidence>
<protein>
    <recommendedName>
        <fullName evidence="1">tRNA-specific 2-thiouridylase MnmA</fullName>
        <ecNumber evidence="1">2.8.1.13</ecNumber>
    </recommendedName>
</protein>
<comment type="function">
    <text evidence="1">Catalyzes the 2-thiolation of uridine at the wobble position (U34) of tRNA, leading to the formation of s(2)U34.</text>
</comment>
<comment type="catalytic activity">
    <reaction evidence="1">
        <text>S-sulfanyl-L-cysteinyl-[protein] + uridine(34) in tRNA + AH2 + ATP = 2-thiouridine(34) in tRNA + L-cysteinyl-[protein] + A + AMP + diphosphate + H(+)</text>
        <dbReference type="Rhea" id="RHEA:47032"/>
        <dbReference type="Rhea" id="RHEA-COMP:10131"/>
        <dbReference type="Rhea" id="RHEA-COMP:11726"/>
        <dbReference type="Rhea" id="RHEA-COMP:11727"/>
        <dbReference type="Rhea" id="RHEA-COMP:11728"/>
        <dbReference type="ChEBI" id="CHEBI:13193"/>
        <dbReference type="ChEBI" id="CHEBI:15378"/>
        <dbReference type="ChEBI" id="CHEBI:17499"/>
        <dbReference type="ChEBI" id="CHEBI:29950"/>
        <dbReference type="ChEBI" id="CHEBI:30616"/>
        <dbReference type="ChEBI" id="CHEBI:33019"/>
        <dbReference type="ChEBI" id="CHEBI:61963"/>
        <dbReference type="ChEBI" id="CHEBI:65315"/>
        <dbReference type="ChEBI" id="CHEBI:87170"/>
        <dbReference type="ChEBI" id="CHEBI:456215"/>
        <dbReference type="EC" id="2.8.1.13"/>
    </reaction>
</comment>
<comment type="subcellular location">
    <subcellularLocation>
        <location evidence="1">Cytoplasm</location>
    </subcellularLocation>
</comment>
<comment type="similarity">
    <text evidence="1">Belongs to the MnmA/TRMU family.</text>
</comment>
<reference key="1">
    <citation type="journal article" date="2006" name="Proc. Natl. Acad. Sci. U.S.A.">
        <title>Comparative genomics of the lactic acid bacteria.</title>
        <authorList>
            <person name="Makarova K.S."/>
            <person name="Slesarev A."/>
            <person name="Wolf Y.I."/>
            <person name="Sorokin A."/>
            <person name="Mirkin B."/>
            <person name="Koonin E.V."/>
            <person name="Pavlov A."/>
            <person name="Pavlova N."/>
            <person name="Karamychev V."/>
            <person name="Polouchine N."/>
            <person name="Shakhova V."/>
            <person name="Grigoriev I."/>
            <person name="Lou Y."/>
            <person name="Rohksar D."/>
            <person name="Lucas S."/>
            <person name="Huang K."/>
            <person name="Goodstein D.M."/>
            <person name="Hawkins T."/>
            <person name="Plengvidhya V."/>
            <person name="Welker D."/>
            <person name="Hughes J."/>
            <person name="Goh Y."/>
            <person name="Benson A."/>
            <person name="Baldwin K."/>
            <person name="Lee J.-H."/>
            <person name="Diaz-Muniz I."/>
            <person name="Dosti B."/>
            <person name="Smeianov V."/>
            <person name="Wechter W."/>
            <person name="Barabote R."/>
            <person name="Lorca G."/>
            <person name="Altermann E."/>
            <person name="Barrangou R."/>
            <person name="Ganesan B."/>
            <person name="Xie Y."/>
            <person name="Rawsthorne H."/>
            <person name="Tamir D."/>
            <person name="Parker C."/>
            <person name="Breidt F."/>
            <person name="Broadbent J.R."/>
            <person name="Hutkins R."/>
            <person name="O'Sullivan D."/>
            <person name="Steele J."/>
            <person name="Unlu G."/>
            <person name="Saier M.H. Jr."/>
            <person name="Klaenhammer T."/>
            <person name="Richardson P."/>
            <person name="Kozyavkin S."/>
            <person name="Weimer B.C."/>
            <person name="Mills D.A."/>
        </authorList>
    </citation>
    <scope>NUCLEOTIDE SEQUENCE [LARGE SCALE GENOMIC DNA]</scope>
    <source>
        <strain>ATCC BAA-491 / LMD-9</strain>
    </source>
</reference>
<organism>
    <name type="scientific">Streptococcus thermophilus (strain ATCC BAA-491 / LMD-9)</name>
    <dbReference type="NCBI Taxonomy" id="322159"/>
    <lineage>
        <taxon>Bacteria</taxon>
        <taxon>Bacillati</taxon>
        <taxon>Bacillota</taxon>
        <taxon>Bacilli</taxon>
        <taxon>Lactobacillales</taxon>
        <taxon>Streptococcaceae</taxon>
        <taxon>Streptococcus</taxon>
    </lineage>
</organism>
<sequence length="373" mass="41800">MTDNSKTRVVVGMSGGVDSSVTALLLKEQGYDVIGVFMKNWDDTDEFGVCTATEDYKDVAAVADQIDIPYYSVNFEKEYWDRVFEYFLAEYRAGRTPNPDVMCNKEIKFKAFLDYAMTLGADYVATGHYAQVVRDEDGIVHMLRGADNNKDQTYFLSQLSQEQLQKAMFPLGHLQKSEVREIAERAGLATAKKKDSTGICFIGEKNFKEFLSQYLPAQKGRMMTVDGRDMGEHNGLMYYTIGQRGGMGIGGQKGGDNAPWFVVGKDLSKNILYVGQGFHHESLMSTSLDASTIHFTRDMPEEFEMECTAKFRYRQPDSKVTVKVKGDKSEVIFAEPQRAITPGQAVVFYDGQECLGGGIIDQAYKDGKVCQYI</sequence>
<proteinExistence type="inferred from homology"/>
<gene>
    <name evidence="1" type="primary">mnmA</name>
    <name type="synonym">trmU</name>
    <name type="ordered locus">STER_1979</name>
</gene>